<name>RL9_SHESH</name>
<comment type="function">
    <text evidence="1">Binds to the 23S rRNA.</text>
</comment>
<comment type="similarity">
    <text evidence="1">Belongs to the bacterial ribosomal protein bL9 family.</text>
</comment>
<sequence length="150" mass="15809">MNVILLDKIANLGNLGDQVAVKAGYARNFLLPQGKAVVANTANTEVFEARRAELEAKLVADLTAANERAEKINALESIVIASKAGDEGKLFGSIGNRDIADAVTAAGVELAKSEVRLPLGALRTTGEFEVEVQVHTEVKAIVKLSVVAED</sequence>
<reference key="1">
    <citation type="submission" date="2007-08" db="EMBL/GenBank/DDBJ databases">
        <title>Complete sequence of Shewanella sediminis HAW-EB3.</title>
        <authorList>
            <consortium name="US DOE Joint Genome Institute"/>
            <person name="Copeland A."/>
            <person name="Lucas S."/>
            <person name="Lapidus A."/>
            <person name="Barry K."/>
            <person name="Glavina del Rio T."/>
            <person name="Dalin E."/>
            <person name="Tice H."/>
            <person name="Pitluck S."/>
            <person name="Chertkov O."/>
            <person name="Brettin T."/>
            <person name="Bruce D."/>
            <person name="Detter J.C."/>
            <person name="Han C."/>
            <person name="Schmutz J."/>
            <person name="Larimer F."/>
            <person name="Land M."/>
            <person name="Hauser L."/>
            <person name="Kyrpides N."/>
            <person name="Kim E."/>
            <person name="Zhao J.-S."/>
            <person name="Richardson P."/>
        </authorList>
    </citation>
    <scope>NUCLEOTIDE SEQUENCE [LARGE SCALE GENOMIC DNA]</scope>
    <source>
        <strain>HAW-EB3</strain>
    </source>
</reference>
<organism>
    <name type="scientific">Shewanella sediminis (strain HAW-EB3)</name>
    <dbReference type="NCBI Taxonomy" id="425104"/>
    <lineage>
        <taxon>Bacteria</taxon>
        <taxon>Pseudomonadati</taxon>
        <taxon>Pseudomonadota</taxon>
        <taxon>Gammaproteobacteria</taxon>
        <taxon>Alteromonadales</taxon>
        <taxon>Shewanellaceae</taxon>
        <taxon>Shewanella</taxon>
    </lineage>
</organism>
<evidence type="ECO:0000255" key="1">
    <source>
        <dbReference type="HAMAP-Rule" id="MF_00503"/>
    </source>
</evidence>
<evidence type="ECO:0000305" key="2"/>
<gene>
    <name evidence="1" type="primary">rplI</name>
    <name type="ordered locus">Ssed_0760</name>
</gene>
<feature type="chain" id="PRO_1000081503" description="Large ribosomal subunit protein bL9">
    <location>
        <begin position="1"/>
        <end position="150"/>
    </location>
</feature>
<keyword id="KW-1185">Reference proteome</keyword>
<keyword id="KW-0687">Ribonucleoprotein</keyword>
<keyword id="KW-0689">Ribosomal protein</keyword>
<keyword id="KW-0694">RNA-binding</keyword>
<keyword id="KW-0699">rRNA-binding</keyword>
<accession>A8FR98</accession>
<protein>
    <recommendedName>
        <fullName evidence="1">Large ribosomal subunit protein bL9</fullName>
    </recommendedName>
    <alternativeName>
        <fullName evidence="2">50S ribosomal protein L9</fullName>
    </alternativeName>
</protein>
<dbReference type="EMBL" id="CP000821">
    <property type="protein sequence ID" value="ABV35371.1"/>
    <property type="molecule type" value="Genomic_DNA"/>
</dbReference>
<dbReference type="RefSeq" id="WP_012141107.1">
    <property type="nucleotide sequence ID" value="NC_009831.1"/>
</dbReference>
<dbReference type="SMR" id="A8FR98"/>
<dbReference type="STRING" id="425104.Ssed_0760"/>
<dbReference type="KEGG" id="sse:Ssed_0760"/>
<dbReference type="eggNOG" id="COG0359">
    <property type="taxonomic scope" value="Bacteria"/>
</dbReference>
<dbReference type="HOGENOM" id="CLU_078938_4_1_6"/>
<dbReference type="OrthoDB" id="9788336at2"/>
<dbReference type="Proteomes" id="UP000002015">
    <property type="component" value="Chromosome"/>
</dbReference>
<dbReference type="GO" id="GO:1990904">
    <property type="term" value="C:ribonucleoprotein complex"/>
    <property type="evidence" value="ECO:0007669"/>
    <property type="project" value="UniProtKB-KW"/>
</dbReference>
<dbReference type="GO" id="GO:0005840">
    <property type="term" value="C:ribosome"/>
    <property type="evidence" value="ECO:0007669"/>
    <property type="project" value="UniProtKB-KW"/>
</dbReference>
<dbReference type="GO" id="GO:0019843">
    <property type="term" value="F:rRNA binding"/>
    <property type="evidence" value="ECO:0007669"/>
    <property type="project" value="UniProtKB-UniRule"/>
</dbReference>
<dbReference type="GO" id="GO:0003735">
    <property type="term" value="F:structural constituent of ribosome"/>
    <property type="evidence" value="ECO:0007669"/>
    <property type="project" value="InterPro"/>
</dbReference>
<dbReference type="GO" id="GO:0006412">
    <property type="term" value="P:translation"/>
    <property type="evidence" value="ECO:0007669"/>
    <property type="project" value="UniProtKB-UniRule"/>
</dbReference>
<dbReference type="FunFam" id="3.10.430.100:FF:000001">
    <property type="entry name" value="50S ribosomal protein L9"/>
    <property type="match status" value="1"/>
</dbReference>
<dbReference type="FunFam" id="3.40.5.10:FF:000001">
    <property type="entry name" value="50S ribosomal protein L9"/>
    <property type="match status" value="1"/>
</dbReference>
<dbReference type="Gene3D" id="3.10.430.100">
    <property type="entry name" value="Ribosomal protein L9, C-terminal domain"/>
    <property type="match status" value="1"/>
</dbReference>
<dbReference type="Gene3D" id="3.40.5.10">
    <property type="entry name" value="Ribosomal protein L9, N-terminal domain"/>
    <property type="match status" value="1"/>
</dbReference>
<dbReference type="HAMAP" id="MF_00503">
    <property type="entry name" value="Ribosomal_bL9"/>
    <property type="match status" value="1"/>
</dbReference>
<dbReference type="InterPro" id="IPR000244">
    <property type="entry name" value="Ribosomal_bL9"/>
</dbReference>
<dbReference type="InterPro" id="IPR009027">
    <property type="entry name" value="Ribosomal_bL9/RNase_H1_N"/>
</dbReference>
<dbReference type="InterPro" id="IPR020594">
    <property type="entry name" value="Ribosomal_bL9_bac/chp"/>
</dbReference>
<dbReference type="InterPro" id="IPR020069">
    <property type="entry name" value="Ribosomal_bL9_C"/>
</dbReference>
<dbReference type="InterPro" id="IPR036791">
    <property type="entry name" value="Ribosomal_bL9_C_sf"/>
</dbReference>
<dbReference type="InterPro" id="IPR020070">
    <property type="entry name" value="Ribosomal_bL9_N"/>
</dbReference>
<dbReference type="InterPro" id="IPR036935">
    <property type="entry name" value="Ribosomal_bL9_N_sf"/>
</dbReference>
<dbReference type="NCBIfam" id="TIGR00158">
    <property type="entry name" value="L9"/>
    <property type="match status" value="1"/>
</dbReference>
<dbReference type="PANTHER" id="PTHR21368">
    <property type="entry name" value="50S RIBOSOMAL PROTEIN L9"/>
    <property type="match status" value="1"/>
</dbReference>
<dbReference type="Pfam" id="PF03948">
    <property type="entry name" value="Ribosomal_L9_C"/>
    <property type="match status" value="1"/>
</dbReference>
<dbReference type="Pfam" id="PF01281">
    <property type="entry name" value="Ribosomal_L9_N"/>
    <property type="match status" value="1"/>
</dbReference>
<dbReference type="SUPFAM" id="SSF55658">
    <property type="entry name" value="L9 N-domain-like"/>
    <property type="match status" value="1"/>
</dbReference>
<dbReference type="SUPFAM" id="SSF55653">
    <property type="entry name" value="Ribosomal protein L9 C-domain"/>
    <property type="match status" value="1"/>
</dbReference>
<dbReference type="PROSITE" id="PS00651">
    <property type="entry name" value="RIBOSOMAL_L9"/>
    <property type="match status" value="1"/>
</dbReference>
<proteinExistence type="inferred from homology"/>